<feature type="chain" id="PRO_0000261700" description="Large ribosomal subunit protein uL13">
    <location>
        <begin position="1"/>
        <end position="142"/>
    </location>
</feature>
<keyword id="KW-1185">Reference proteome</keyword>
<keyword id="KW-0687">Ribonucleoprotein</keyword>
<keyword id="KW-0689">Ribosomal protein</keyword>
<name>RL13_BURMA</name>
<accession>Q62HC0</accession>
<sequence>MKTFSAKAHEVTREWYVIDATDKVLGRVASEVARRLRGKHKPEFTPHVDTGDFIIVINASKLKVTGNKTLDKKYYRHSGYPGGIYETTFGKMQERFPGRALEKAVKGMLPKCPLGYAMIKKLKVYAEATHPHSAQQPKALEI</sequence>
<organism>
    <name type="scientific">Burkholderia mallei (strain ATCC 23344)</name>
    <dbReference type="NCBI Taxonomy" id="243160"/>
    <lineage>
        <taxon>Bacteria</taxon>
        <taxon>Pseudomonadati</taxon>
        <taxon>Pseudomonadota</taxon>
        <taxon>Betaproteobacteria</taxon>
        <taxon>Burkholderiales</taxon>
        <taxon>Burkholderiaceae</taxon>
        <taxon>Burkholderia</taxon>
        <taxon>pseudomallei group</taxon>
    </lineage>
</organism>
<evidence type="ECO:0000255" key="1">
    <source>
        <dbReference type="HAMAP-Rule" id="MF_01366"/>
    </source>
</evidence>
<evidence type="ECO:0000305" key="2"/>
<gene>
    <name evidence="1" type="primary">rplM</name>
    <name type="ordered locus">BMA2341</name>
</gene>
<reference key="1">
    <citation type="journal article" date="2004" name="Proc. Natl. Acad. Sci. U.S.A.">
        <title>Structural flexibility in the Burkholderia mallei genome.</title>
        <authorList>
            <person name="Nierman W.C."/>
            <person name="DeShazer D."/>
            <person name="Kim H.S."/>
            <person name="Tettelin H."/>
            <person name="Nelson K.E."/>
            <person name="Feldblyum T.V."/>
            <person name="Ulrich R.L."/>
            <person name="Ronning C.M."/>
            <person name="Brinkac L.M."/>
            <person name="Daugherty S.C."/>
            <person name="Davidsen T.D."/>
            <person name="DeBoy R.T."/>
            <person name="Dimitrov G."/>
            <person name="Dodson R.J."/>
            <person name="Durkin A.S."/>
            <person name="Gwinn M.L."/>
            <person name="Haft D.H."/>
            <person name="Khouri H.M."/>
            <person name="Kolonay J.F."/>
            <person name="Madupu R."/>
            <person name="Mohammoud Y."/>
            <person name="Nelson W.C."/>
            <person name="Radune D."/>
            <person name="Romero C.M."/>
            <person name="Sarria S."/>
            <person name="Selengut J."/>
            <person name="Shamblin C."/>
            <person name="Sullivan S.A."/>
            <person name="White O."/>
            <person name="Yu Y."/>
            <person name="Zafar N."/>
            <person name="Zhou L."/>
            <person name="Fraser C.M."/>
        </authorList>
    </citation>
    <scope>NUCLEOTIDE SEQUENCE [LARGE SCALE GENOMIC DNA]</scope>
    <source>
        <strain>ATCC 23344</strain>
    </source>
</reference>
<proteinExistence type="inferred from homology"/>
<dbReference type="EMBL" id="CP000010">
    <property type="protein sequence ID" value="AAU50227.1"/>
    <property type="molecule type" value="Genomic_DNA"/>
</dbReference>
<dbReference type="RefSeq" id="WP_004194372.1">
    <property type="nucleotide sequence ID" value="NC_006348.1"/>
</dbReference>
<dbReference type="RefSeq" id="YP_103900.1">
    <property type="nucleotide sequence ID" value="NC_006348.1"/>
</dbReference>
<dbReference type="SMR" id="Q62HC0"/>
<dbReference type="GeneID" id="92980034"/>
<dbReference type="KEGG" id="bma:BMA2341"/>
<dbReference type="PATRIC" id="fig|243160.12.peg.2411"/>
<dbReference type="eggNOG" id="COG0102">
    <property type="taxonomic scope" value="Bacteria"/>
</dbReference>
<dbReference type="HOGENOM" id="CLU_082184_2_2_4"/>
<dbReference type="Proteomes" id="UP000006693">
    <property type="component" value="Chromosome 1"/>
</dbReference>
<dbReference type="GO" id="GO:0022625">
    <property type="term" value="C:cytosolic large ribosomal subunit"/>
    <property type="evidence" value="ECO:0007669"/>
    <property type="project" value="TreeGrafter"/>
</dbReference>
<dbReference type="GO" id="GO:0003729">
    <property type="term" value="F:mRNA binding"/>
    <property type="evidence" value="ECO:0007669"/>
    <property type="project" value="TreeGrafter"/>
</dbReference>
<dbReference type="GO" id="GO:0003735">
    <property type="term" value="F:structural constituent of ribosome"/>
    <property type="evidence" value="ECO:0007669"/>
    <property type="project" value="InterPro"/>
</dbReference>
<dbReference type="GO" id="GO:0017148">
    <property type="term" value="P:negative regulation of translation"/>
    <property type="evidence" value="ECO:0007669"/>
    <property type="project" value="TreeGrafter"/>
</dbReference>
<dbReference type="GO" id="GO:0006412">
    <property type="term" value="P:translation"/>
    <property type="evidence" value="ECO:0007669"/>
    <property type="project" value="UniProtKB-UniRule"/>
</dbReference>
<dbReference type="CDD" id="cd00392">
    <property type="entry name" value="Ribosomal_L13"/>
    <property type="match status" value="1"/>
</dbReference>
<dbReference type="FunFam" id="3.90.1180.10:FF:000001">
    <property type="entry name" value="50S ribosomal protein L13"/>
    <property type="match status" value="1"/>
</dbReference>
<dbReference type="Gene3D" id="3.90.1180.10">
    <property type="entry name" value="Ribosomal protein L13"/>
    <property type="match status" value="1"/>
</dbReference>
<dbReference type="HAMAP" id="MF_01366">
    <property type="entry name" value="Ribosomal_uL13"/>
    <property type="match status" value="1"/>
</dbReference>
<dbReference type="InterPro" id="IPR005822">
    <property type="entry name" value="Ribosomal_uL13"/>
</dbReference>
<dbReference type="InterPro" id="IPR005823">
    <property type="entry name" value="Ribosomal_uL13_bac-type"/>
</dbReference>
<dbReference type="InterPro" id="IPR036899">
    <property type="entry name" value="Ribosomal_uL13_sf"/>
</dbReference>
<dbReference type="NCBIfam" id="TIGR01066">
    <property type="entry name" value="rplM_bact"/>
    <property type="match status" value="1"/>
</dbReference>
<dbReference type="PANTHER" id="PTHR11545:SF2">
    <property type="entry name" value="LARGE RIBOSOMAL SUBUNIT PROTEIN UL13M"/>
    <property type="match status" value="1"/>
</dbReference>
<dbReference type="PANTHER" id="PTHR11545">
    <property type="entry name" value="RIBOSOMAL PROTEIN L13"/>
    <property type="match status" value="1"/>
</dbReference>
<dbReference type="Pfam" id="PF00572">
    <property type="entry name" value="Ribosomal_L13"/>
    <property type="match status" value="1"/>
</dbReference>
<dbReference type="PIRSF" id="PIRSF002181">
    <property type="entry name" value="Ribosomal_L13"/>
    <property type="match status" value="1"/>
</dbReference>
<dbReference type="SUPFAM" id="SSF52161">
    <property type="entry name" value="Ribosomal protein L13"/>
    <property type="match status" value="1"/>
</dbReference>
<protein>
    <recommendedName>
        <fullName evidence="1">Large ribosomal subunit protein uL13</fullName>
    </recommendedName>
    <alternativeName>
        <fullName evidence="2">50S ribosomal protein L13</fullName>
    </alternativeName>
</protein>
<comment type="function">
    <text evidence="1">This protein is one of the early assembly proteins of the 50S ribosomal subunit, although it is not seen to bind rRNA by itself. It is important during the early stages of 50S assembly.</text>
</comment>
<comment type="subunit">
    <text evidence="1">Part of the 50S ribosomal subunit.</text>
</comment>
<comment type="similarity">
    <text evidence="1">Belongs to the universal ribosomal protein uL13 family.</text>
</comment>